<proteinExistence type="evidence at transcript level"/>
<organism>
    <name type="scientific">Lymnaea stagnalis</name>
    <name type="common">Great pond snail</name>
    <name type="synonym">Helix stagnalis</name>
    <dbReference type="NCBI Taxonomy" id="6523"/>
    <lineage>
        <taxon>Eukaryota</taxon>
        <taxon>Metazoa</taxon>
        <taxon>Spiralia</taxon>
        <taxon>Lophotrochozoa</taxon>
        <taxon>Mollusca</taxon>
        <taxon>Gastropoda</taxon>
        <taxon>Heterobranchia</taxon>
        <taxon>Euthyneura</taxon>
        <taxon>Panpulmonata</taxon>
        <taxon>Hygrophila</taxon>
        <taxon>Lymnaeoidea</taxon>
        <taxon>Lymnaeidae</taxon>
        <taxon>Lymnaea</taxon>
    </lineage>
</organism>
<sequence length="138" mass="15540">MAGVRLVFTKAFMVTVLLTLLLNIGVKPAEGQFSACSFSSRPHPRGICGSDLADLRAFICSRRNQPAMVKRDAETGWLLPETMVKRNAQTDLDDPLRNIKLSSESALTYLTKRQRTTNLVCECCYNVCTVDVFYEYCY</sequence>
<comment type="subunit">
    <text>Heterodimer of a B chain and an A chain linked by two disulfide bonds.</text>
</comment>
<comment type="subcellular location">
    <subcellularLocation>
        <location>Cytoplasmic vesicle</location>
        <location>Secretory vesicle</location>
    </subcellularLocation>
    <text>Secretory granules.</text>
</comment>
<comment type="tissue specificity">
    <text>Expressed in the cerebral light-green cells which are giant neuroendocrines cells involved in the control of growth.</text>
</comment>
<comment type="similarity">
    <text evidence="2">Belongs to the insulin family.</text>
</comment>
<reference key="1">
    <citation type="journal article" date="1992" name="Brain Res. Mol. Brain Res.">
        <title>Characterization of a cDNA clone encoding molluscan insulin-related peptide V of Lymnaea stagnalis.</title>
        <authorList>
            <person name="Smit A.B."/>
            <person name="Thijsen S.F.T."/>
            <person name="Geraerts W.P.M."/>
            <person name="Meester I."/>
            <person name="Heerikhuizen H."/>
            <person name="Joosse J."/>
        </authorList>
    </citation>
    <scope>NUCLEOTIDE SEQUENCE [MRNA]</scope>
    <source>
        <tissue>CNS</tissue>
    </source>
</reference>
<dbReference type="EMBL" id="X59302">
    <property type="status" value="NOT_ANNOTATED_CDS"/>
    <property type="molecule type" value="mRNA"/>
</dbReference>
<dbReference type="PIR" id="A43957">
    <property type="entry name" value="A43957"/>
</dbReference>
<dbReference type="GO" id="GO:0005576">
    <property type="term" value="C:extracellular region"/>
    <property type="evidence" value="ECO:0007669"/>
    <property type="project" value="InterPro"/>
</dbReference>
<dbReference type="GO" id="GO:0030133">
    <property type="term" value="C:transport vesicle"/>
    <property type="evidence" value="ECO:0007669"/>
    <property type="project" value="UniProtKB-SubCell"/>
</dbReference>
<dbReference type="GO" id="GO:0005179">
    <property type="term" value="F:hormone activity"/>
    <property type="evidence" value="ECO:0007669"/>
    <property type="project" value="InterPro"/>
</dbReference>
<dbReference type="CDD" id="cd04366">
    <property type="entry name" value="IlGF_insulin_bombyxin_like"/>
    <property type="match status" value="1"/>
</dbReference>
<dbReference type="Gene3D" id="1.10.100.10">
    <property type="entry name" value="Insulin-like"/>
    <property type="match status" value="1"/>
</dbReference>
<dbReference type="InterPro" id="IPR016179">
    <property type="entry name" value="Insulin-like"/>
</dbReference>
<dbReference type="InterPro" id="IPR036438">
    <property type="entry name" value="Insulin-like_sf"/>
</dbReference>
<dbReference type="InterPro" id="IPR016724">
    <property type="entry name" value="Insulin-rel_pep"/>
</dbReference>
<dbReference type="InterPro" id="IPR022353">
    <property type="entry name" value="Insulin_CS"/>
</dbReference>
<dbReference type="Pfam" id="PF00049">
    <property type="entry name" value="Insulin"/>
    <property type="match status" value="1"/>
</dbReference>
<dbReference type="PIRSF" id="PIRSF018431">
    <property type="entry name" value="Molluscan_insulin_rel_peptide"/>
    <property type="match status" value="1"/>
</dbReference>
<dbReference type="SMART" id="SM00078">
    <property type="entry name" value="IlGF"/>
    <property type="match status" value="1"/>
</dbReference>
<dbReference type="SUPFAM" id="SSF56994">
    <property type="entry name" value="Insulin-like"/>
    <property type="match status" value="1"/>
</dbReference>
<dbReference type="PROSITE" id="PS00262">
    <property type="entry name" value="INSULIN"/>
    <property type="match status" value="1"/>
</dbReference>
<evidence type="ECO:0000250" key="1"/>
<evidence type="ECO:0000305" key="2"/>
<name>MPI5_LYMST</name>
<keyword id="KW-0165">Cleavage on pair of basic residues</keyword>
<keyword id="KW-0968">Cytoplasmic vesicle</keyword>
<keyword id="KW-1015">Disulfide bond</keyword>
<keyword id="KW-0873">Pyrrolidone carboxylic acid</keyword>
<keyword id="KW-0732">Signal</keyword>
<protein>
    <recommendedName>
        <fullName>Molluscan insulin-related peptide 5</fullName>
    </recommendedName>
    <alternativeName>
        <fullName>MIP V</fullName>
    </alternativeName>
    <component>
        <recommendedName>
            <fullName>Molluscan insulin-related peptide 5 B chain</fullName>
        </recommendedName>
    </component>
    <component>
        <recommendedName>
            <fullName>Molluscan insulin-related peptide 5 A chain</fullName>
        </recommendedName>
    </component>
</protein>
<feature type="signal peptide">
    <location>
        <begin position="1"/>
        <end position="31"/>
    </location>
</feature>
<feature type="peptide" id="PRO_0000015949" description="Molluscan insulin-related peptide 5 B chain">
    <location>
        <begin position="32"/>
        <end position="69"/>
    </location>
</feature>
<feature type="propeptide" id="PRO_0000015950" description="C-beta peptide like">
    <location>
        <begin position="72"/>
        <end position="84"/>
    </location>
</feature>
<feature type="propeptide" id="PRO_0000015951" description="C-alpha peptide like">
    <location>
        <begin position="87"/>
        <end position="111"/>
    </location>
</feature>
<feature type="peptide" id="PRO_0000015952" description="Molluscan insulin-related peptide 5 A chain">
    <location>
        <begin position="114"/>
        <end position="138"/>
    </location>
</feature>
<feature type="modified residue" description="Pyrrolidone carboxylic acid" evidence="1">
    <location>
        <position position="32"/>
    </location>
</feature>
<feature type="modified residue" description="Pyrrolidone carboxylic acid" evidence="1">
    <location>
        <position position="114"/>
    </location>
</feature>
<feature type="disulfide bond" description="Interchain (between B and A chains)" evidence="1">
    <location>
        <begin position="48"/>
        <end position="124"/>
    </location>
</feature>
<feature type="disulfide bond" description="Interchain (between B and A chains)" evidence="1">
    <location>
        <begin position="60"/>
        <end position="137"/>
    </location>
</feature>
<feature type="disulfide bond" evidence="1">
    <location>
        <begin position="123"/>
        <end position="128"/>
    </location>
</feature>
<accession>P31241</accession>